<evidence type="ECO:0000255" key="1">
    <source>
        <dbReference type="HAMAP-Rule" id="MF_00632"/>
    </source>
</evidence>
<keyword id="KW-0547">Nucleotide-binding</keyword>
<keyword id="KW-1185">Reference proteome</keyword>
<sequence>MPSFDIQSELNKHEVSNAVDQANREVATRFDFKGSGATYKYEGNSITLQAETDFQLKQMIDILQNKFAKRQIDVAHMKLEDPIIQHKSAQQTVMLLEGIDQTAAKKIIKLIKDQKLKVQAAIQGEKVRVTGKKRDDLQSVIGLLKEQEIGLPLQFDNFRD</sequence>
<dbReference type="EMBL" id="AE016828">
    <property type="protein sequence ID" value="AAO89678.1"/>
    <property type="molecule type" value="Genomic_DNA"/>
</dbReference>
<dbReference type="RefSeq" id="WP_005772268.1">
    <property type="nucleotide sequence ID" value="NZ_CDBG01000001.1"/>
</dbReference>
<dbReference type="SMR" id="Q83F37"/>
<dbReference type="STRING" id="227377.CBU_0114"/>
<dbReference type="DNASU" id="1207985"/>
<dbReference type="EnsemblBacteria" id="AAO89678">
    <property type="protein sequence ID" value="AAO89678"/>
    <property type="gene ID" value="CBU_0114"/>
</dbReference>
<dbReference type="KEGG" id="cbu:CBU_0114"/>
<dbReference type="PATRIC" id="fig|227377.7.peg.117"/>
<dbReference type="eggNOG" id="COG1666">
    <property type="taxonomic scope" value="Bacteria"/>
</dbReference>
<dbReference type="HOGENOM" id="CLU_099839_1_0_6"/>
<dbReference type="OrthoDB" id="9801447at2"/>
<dbReference type="Proteomes" id="UP000002671">
    <property type="component" value="Chromosome"/>
</dbReference>
<dbReference type="GO" id="GO:0005829">
    <property type="term" value="C:cytosol"/>
    <property type="evidence" value="ECO:0000318"/>
    <property type="project" value="GO_Central"/>
</dbReference>
<dbReference type="GO" id="GO:0000166">
    <property type="term" value="F:nucleotide binding"/>
    <property type="evidence" value="ECO:0000318"/>
    <property type="project" value="GO_Central"/>
</dbReference>
<dbReference type="CDD" id="cd11740">
    <property type="entry name" value="YajQ_like"/>
    <property type="match status" value="1"/>
</dbReference>
<dbReference type="FunFam" id="3.30.70.860:FF:000001">
    <property type="entry name" value="UPF0234 protein YajQ"/>
    <property type="match status" value="1"/>
</dbReference>
<dbReference type="Gene3D" id="3.30.70.860">
    <property type="match status" value="1"/>
</dbReference>
<dbReference type="Gene3D" id="3.30.70.990">
    <property type="entry name" value="YajQ-like, domain 2"/>
    <property type="match status" value="1"/>
</dbReference>
<dbReference type="HAMAP" id="MF_00632">
    <property type="entry name" value="YajQ"/>
    <property type="match status" value="1"/>
</dbReference>
<dbReference type="InterPro" id="IPR007551">
    <property type="entry name" value="DUF520"/>
</dbReference>
<dbReference type="InterPro" id="IPR035571">
    <property type="entry name" value="UPF0234-like_C"/>
</dbReference>
<dbReference type="InterPro" id="IPR035570">
    <property type="entry name" value="UPF0234_N"/>
</dbReference>
<dbReference type="InterPro" id="IPR036183">
    <property type="entry name" value="YajQ-like_sf"/>
</dbReference>
<dbReference type="NCBIfam" id="NF003819">
    <property type="entry name" value="PRK05412.1"/>
    <property type="match status" value="1"/>
</dbReference>
<dbReference type="PANTHER" id="PTHR30476">
    <property type="entry name" value="UPF0234 PROTEIN YAJQ"/>
    <property type="match status" value="1"/>
</dbReference>
<dbReference type="PANTHER" id="PTHR30476:SF0">
    <property type="entry name" value="UPF0234 PROTEIN YAJQ"/>
    <property type="match status" value="1"/>
</dbReference>
<dbReference type="Pfam" id="PF04461">
    <property type="entry name" value="DUF520"/>
    <property type="match status" value="1"/>
</dbReference>
<dbReference type="SUPFAM" id="SSF89963">
    <property type="entry name" value="YajQ-like"/>
    <property type="match status" value="2"/>
</dbReference>
<reference key="1">
    <citation type="journal article" date="2003" name="Proc. Natl. Acad. Sci. U.S.A.">
        <title>Complete genome sequence of the Q-fever pathogen, Coxiella burnetii.</title>
        <authorList>
            <person name="Seshadri R."/>
            <person name="Paulsen I.T."/>
            <person name="Eisen J.A."/>
            <person name="Read T.D."/>
            <person name="Nelson K.E."/>
            <person name="Nelson W.C."/>
            <person name="Ward N.L."/>
            <person name="Tettelin H."/>
            <person name="Davidsen T.M."/>
            <person name="Beanan M.J."/>
            <person name="DeBoy R.T."/>
            <person name="Daugherty S.C."/>
            <person name="Brinkac L.M."/>
            <person name="Madupu R."/>
            <person name="Dodson R.J."/>
            <person name="Khouri H.M."/>
            <person name="Lee K.H."/>
            <person name="Carty H.A."/>
            <person name="Scanlan D."/>
            <person name="Heinzen R.A."/>
            <person name="Thompson H.A."/>
            <person name="Samuel J.E."/>
            <person name="Fraser C.M."/>
            <person name="Heidelberg J.F."/>
        </authorList>
    </citation>
    <scope>NUCLEOTIDE SEQUENCE [LARGE SCALE GENOMIC DNA]</scope>
    <source>
        <strain>RSA 493 / Nine Mile phase I</strain>
    </source>
</reference>
<accession>Q83F37</accession>
<comment type="function">
    <text evidence="1">Nucleotide-binding protein.</text>
</comment>
<comment type="similarity">
    <text evidence="1">Belongs to the YajQ family.</text>
</comment>
<name>Y114_COXBU</name>
<organism>
    <name type="scientific">Coxiella burnetii (strain RSA 493 / Nine Mile phase I)</name>
    <dbReference type="NCBI Taxonomy" id="227377"/>
    <lineage>
        <taxon>Bacteria</taxon>
        <taxon>Pseudomonadati</taxon>
        <taxon>Pseudomonadota</taxon>
        <taxon>Gammaproteobacteria</taxon>
        <taxon>Legionellales</taxon>
        <taxon>Coxiellaceae</taxon>
        <taxon>Coxiella</taxon>
    </lineage>
</organism>
<proteinExistence type="inferred from homology"/>
<protein>
    <recommendedName>
        <fullName evidence="1">Nucleotide-binding protein CBU_0114</fullName>
    </recommendedName>
</protein>
<gene>
    <name type="ordered locus">CBU_0114</name>
</gene>
<feature type="chain" id="PRO_0000106179" description="Nucleotide-binding protein CBU_0114">
    <location>
        <begin position="1"/>
        <end position="160"/>
    </location>
</feature>